<sequence>MVDVNRFKSMQITLASPSKVRSWSYGEVKKPETINYRTLKPEREGLFDEVIFGPTKDWECACGKYKRIRYKGIVCDRCGVEVTRAKVRRERMGHIELKAPVSHIWYFKGIPSRMGLTLDMSPRALEEVIYFAAYVVIDPKDTPLEPKSLLTEREYREKLQEYGHGSFVAKMGAEAIQDLLKRVDLAAEIAELKEELKSASGQKRIKAVRRLDVLDAFNKSGNKPEWMVLNILPVIPPDLRPMVQLDGGRFAASDLNDLYRRVINRNNRLARLLELNAPGIIVQNEKRMLQEAVDALIDNGRRGRPITGPGSRPLKSLSHMLKGKQGRFRQNLLGKRVDFSGRSVIAVGPTLKMYQCGVPREMAIELFKPFVMREIVAKEYAGNVKAAKRMVERGDERIWDILEEVIKEHPVLLNRAPTLHRLGIQAFEPVLIDGKALRLHPLVCEAYNADFDGDQMAIHVPLSEEAQAEARLLMLAAEHILNPKDGKPVVTPSQDMVLGNYYLTMEDAGREGEGMIFKDKDEAVMAYRNGYAHLHSRVGIAVDSMPNKPWKDSQRHKIMVTTVGKILFNDIMPEDLPYLQEPNNANLTEGTPDKYFLEPGQDIQEVIDRLDINVPFKKKNLGNIIAETFKRFRTTETSAFLDRLKDLGYYHSTLAGLTVGIADIPVIDNKAEIIDAAHHRVEEINKAFRRGLMTDDDRYVAVTTTWREAKEALEKRLIETQDPKNPIVMMMDSGARGNISNFSQLAGMRGLMAAPNGRIMELPILSNFREGLSVLEMFFSTHGARKGMTDTALKTADSGYLTRRLVDVAQDVIIREDDCGTDRGLLIRAITDGKEVTETLEERLQGRYTRKSVKHPETGEVLIGADQLITEDMARKIVDAGVEEVTIRSVFTCATRHGVCRHCYGINLATGDAVEVGEAVGTIAAQSIGEPGTQLTMRTFHTGGVASNTDITQGLPRIQEIFEARNPKGEAVITEVKGNVVEIEEDASTRTKKVYVQGKTGMGEYVVPFTARMKVEVGDEVNRGAALTEGSIQPKRLLEVRDTLSVETYLLAEVQKVYRSQGVEIGDKHVEVMVRQMLRKVRVMDPGDTDLLPGTLMDISDFTDANKDIVISGGIPATSRPVLMGITKASLETNSFLSAASFQETTRVLTDAAIRGKKDHLLGLKENVIIGKIIPAGTGMARYRNIEPQAMNEIEVIDHTEVSAEAVFTAEAE</sequence>
<gene>
    <name evidence="1" type="primary">rpoC</name>
    <name type="ordered locus">M28_Spy0082</name>
</gene>
<reference key="1">
    <citation type="journal article" date="2005" name="J. Infect. Dis.">
        <title>Genome sequence of a serotype M28 strain of group A Streptococcus: potential new insights into puerperal sepsis and bacterial disease specificity.</title>
        <authorList>
            <person name="Green N.M."/>
            <person name="Zhang S."/>
            <person name="Porcella S.F."/>
            <person name="Nagiec M.J."/>
            <person name="Barbian K.D."/>
            <person name="Beres S.B."/>
            <person name="Lefebvre R.B."/>
            <person name="Musser J.M."/>
        </authorList>
    </citation>
    <scope>NUCLEOTIDE SEQUENCE [LARGE SCALE GENOMIC DNA]</scope>
    <source>
        <strain>MGAS6180</strain>
    </source>
</reference>
<accession>Q48VR0</accession>
<evidence type="ECO:0000255" key="1">
    <source>
        <dbReference type="HAMAP-Rule" id="MF_01322"/>
    </source>
</evidence>
<feature type="chain" id="PRO_0000225582" description="DNA-directed RNA polymerase subunit beta'">
    <location>
        <begin position="1"/>
        <end position="1213"/>
    </location>
</feature>
<feature type="binding site" evidence="1">
    <location>
        <position position="60"/>
    </location>
    <ligand>
        <name>Zn(2+)</name>
        <dbReference type="ChEBI" id="CHEBI:29105"/>
        <label>1</label>
    </ligand>
</feature>
<feature type="binding site" evidence="1">
    <location>
        <position position="62"/>
    </location>
    <ligand>
        <name>Zn(2+)</name>
        <dbReference type="ChEBI" id="CHEBI:29105"/>
        <label>1</label>
    </ligand>
</feature>
<feature type="binding site" evidence="1">
    <location>
        <position position="75"/>
    </location>
    <ligand>
        <name>Zn(2+)</name>
        <dbReference type="ChEBI" id="CHEBI:29105"/>
        <label>1</label>
    </ligand>
</feature>
<feature type="binding site" evidence="1">
    <location>
        <position position="78"/>
    </location>
    <ligand>
        <name>Zn(2+)</name>
        <dbReference type="ChEBI" id="CHEBI:29105"/>
        <label>1</label>
    </ligand>
</feature>
<feature type="binding site" evidence="1">
    <location>
        <position position="450"/>
    </location>
    <ligand>
        <name>Mg(2+)</name>
        <dbReference type="ChEBI" id="CHEBI:18420"/>
    </ligand>
</feature>
<feature type="binding site" evidence="1">
    <location>
        <position position="452"/>
    </location>
    <ligand>
        <name>Mg(2+)</name>
        <dbReference type="ChEBI" id="CHEBI:18420"/>
    </ligand>
</feature>
<feature type="binding site" evidence="1">
    <location>
        <position position="454"/>
    </location>
    <ligand>
        <name>Mg(2+)</name>
        <dbReference type="ChEBI" id="CHEBI:18420"/>
    </ligand>
</feature>
<feature type="binding site" evidence="1">
    <location>
        <position position="819"/>
    </location>
    <ligand>
        <name>Zn(2+)</name>
        <dbReference type="ChEBI" id="CHEBI:29105"/>
        <label>2</label>
    </ligand>
</feature>
<feature type="binding site" evidence="1">
    <location>
        <position position="893"/>
    </location>
    <ligand>
        <name>Zn(2+)</name>
        <dbReference type="ChEBI" id="CHEBI:29105"/>
        <label>2</label>
    </ligand>
</feature>
<feature type="binding site" evidence="1">
    <location>
        <position position="900"/>
    </location>
    <ligand>
        <name>Zn(2+)</name>
        <dbReference type="ChEBI" id="CHEBI:29105"/>
        <label>2</label>
    </ligand>
</feature>
<feature type="binding site" evidence="1">
    <location>
        <position position="903"/>
    </location>
    <ligand>
        <name>Zn(2+)</name>
        <dbReference type="ChEBI" id="CHEBI:29105"/>
        <label>2</label>
    </ligand>
</feature>
<organism>
    <name type="scientific">Streptococcus pyogenes serotype M28 (strain MGAS6180)</name>
    <dbReference type="NCBI Taxonomy" id="319701"/>
    <lineage>
        <taxon>Bacteria</taxon>
        <taxon>Bacillati</taxon>
        <taxon>Bacillota</taxon>
        <taxon>Bacilli</taxon>
        <taxon>Lactobacillales</taxon>
        <taxon>Streptococcaceae</taxon>
        <taxon>Streptococcus</taxon>
    </lineage>
</organism>
<proteinExistence type="inferred from homology"/>
<name>RPOC_STRPM</name>
<keyword id="KW-0240">DNA-directed RNA polymerase</keyword>
<keyword id="KW-0460">Magnesium</keyword>
<keyword id="KW-0479">Metal-binding</keyword>
<keyword id="KW-0548">Nucleotidyltransferase</keyword>
<keyword id="KW-0804">Transcription</keyword>
<keyword id="KW-0808">Transferase</keyword>
<keyword id="KW-0862">Zinc</keyword>
<protein>
    <recommendedName>
        <fullName evidence="1">DNA-directed RNA polymerase subunit beta'</fullName>
        <shortName evidence="1">RNAP subunit beta'</shortName>
        <ecNumber evidence="1">2.7.7.6</ecNumber>
    </recommendedName>
    <alternativeName>
        <fullName evidence="1">RNA polymerase subunit beta'</fullName>
    </alternativeName>
    <alternativeName>
        <fullName evidence="1">Transcriptase subunit beta'</fullName>
    </alternativeName>
</protein>
<dbReference type="EC" id="2.7.7.6" evidence="1"/>
<dbReference type="EMBL" id="CP000056">
    <property type="protein sequence ID" value="AAX71196.1"/>
    <property type="molecule type" value="Genomic_DNA"/>
</dbReference>
<dbReference type="RefSeq" id="WP_011284419.1">
    <property type="nucleotide sequence ID" value="NC_007296.2"/>
</dbReference>
<dbReference type="SMR" id="Q48VR0"/>
<dbReference type="KEGG" id="spb:M28_Spy0082"/>
<dbReference type="HOGENOM" id="CLU_000524_3_1_9"/>
<dbReference type="GO" id="GO:0000428">
    <property type="term" value="C:DNA-directed RNA polymerase complex"/>
    <property type="evidence" value="ECO:0007669"/>
    <property type="project" value="UniProtKB-KW"/>
</dbReference>
<dbReference type="GO" id="GO:0003677">
    <property type="term" value="F:DNA binding"/>
    <property type="evidence" value="ECO:0007669"/>
    <property type="project" value="UniProtKB-UniRule"/>
</dbReference>
<dbReference type="GO" id="GO:0003899">
    <property type="term" value="F:DNA-directed RNA polymerase activity"/>
    <property type="evidence" value="ECO:0007669"/>
    <property type="project" value="UniProtKB-UniRule"/>
</dbReference>
<dbReference type="GO" id="GO:0000287">
    <property type="term" value="F:magnesium ion binding"/>
    <property type="evidence" value="ECO:0007669"/>
    <property type="project" value="UniProtKB-UniRule"/>
</dbReference>
<dbReference type="GO" id="GO:0008270">
    <property type="term" value="F:zinc ion binding"/>
    <property type="evidence" value="ECO:0007669"/>
    <property type="project" value="UniProtKB-UniRule"/>
</dbReference>
<dbReference type="GO" id="GO:0006351">
    <property type="term" value="P:DNA-templated transcription"/>
    <property type="evidence" value="ECO:0007669"/>
    <property type="project" value="UniProtKB-UniRule"/>
</dbReference>
<dbReference type="CDD" id="cd02655">
    <property type="entry name" value="RNAP_beta'_C"/>
    <property type="match status" value="1"/>
</dbReference>
<dbReference type="CDD" id="cd01609">
    <property type="entry name" value="RNAP_beta'_N"/>
    <property type="match status" value="1"/>
</dbReference>
<dbReference type="FunFam" id="1.10.150.390:FF:000002">
    <property type="entry name" value="DNA-directed RNA polymerase subunit beta"/>
    <property type="match status" value="1"/>
</dbReference>
<dbReference type="FunFam" id="4.10.860.120:FF:000001">
    <property type="entry name" value="DNA-directed RNA polymerase subunit beta"/>
    <property type="match status" value="1"/>
</dbReference>
<dbReference type="Gene3D" id="1.10.132.30">
    <property type="match status" value="1"/>
</dbReference>
<dbReference type="Gene3D" id="1.10.150.390">
    <property type="match status" value="1"/>
</dbReference>
<dbReference type="Gene3D" id="1.10.1790.20">
    <property type="match status" value="1"/>
</dbReference>
<dbReference type="Gene3D" id="1.10.40.90">
    <property type="match status" value="1"/>
</dbReference>
<dbReference type="Gene3D" id="2.40.40.20">
    <property type="match status" value="1"/>
</dbReference>
<dbReference type="Gene3D" id="2.40.50.100">
    <property type="match status" value="1"/>
</dbReference>
<dbReference type="Gene3D" id="4.10.860.120">
    <property type="entry name" value="RNA polymerase II, clamp domain"/>
    <property type="match status" value="1"/>
</dbReference>
<dbReference type="Gene3D" id="1.10.274.100">
    <property type="entry name" value="RNA polymerase Rpb1, domain 3"/>
    <property type="match status" value="1"/>
</dbReference>
<dbReference type="HAMAP" id="MF_01322">
    <property type="entry name" value="RNApol_bact_RpoC"/>
    <property type="match status" value="1"/>
</dbReference>
<dbReference type="InterPro" id="IPR045867">
    <property type="entry name" value="DNA-dir_RpoC_beta_prime"/>
</dbReference>
<dbReference type="InterPro" id="IPR012754">
    <property type="entry name" value="DNA-dir_RpoC_beta_prime_bact"/>
</dbReference>
<dbReference type="InterPro" id="IPR000722">
    <property type="entry name" value="RNA_pol_asu"/>
</dbReference>
<dbReference type="InterPro" id="IPR006592">
    <property type="entry name" value="RNA_pol_N"/>
</dbReference>
<dbReference type="InterPro" id="IPR007080">
    <property type="entry name" value="RNA_pol_Rpb1_1"/>
</dbReference>
<dbReference type="InterPro" id="IPR007066">
    <property type="entry name" value="RNA_pol_Rpb1_3"/>
</dbReference>
<dbReference type="InterPro" id="IPR042102">
    <property type="entry name" value="RNA_pol_Rpb1_3_sf"/>
</dbReference>
<dbReference type="InterPro" id="IPR007083">
    <property type="entry name" value="RNA_pol_Rpb1_4"/>
</dbReference>
<dbReference type="InterPro" id="IPR007081">
    <property type="entry name" value="RNA_pol_Rpb1_5"/>
</dbReference>
<dbReference type="InterPro" id="IPR044893">
    <property type="entry name" value="RNA_pol_Rpb1_clamp_domain"/>
</dbReference>
<dbReference type="InterPro" id="IPR038120">
    <property type="entry name" value="Rpb1_funnel_sf"/>
</dbReference>
<dbReference type="NCBIfam" id="TIGR02386">
    <property type="entry name" value="rpoC_TIGR"/>
    <property type="match status" value="1"/>
</dbReference>
<dbReference type="PANTHER" id="PTHR19376">
    <property type="entry name" value="DNA-DIRECTED RNA POLYMERASE"/>
    <property type="match status" value="1"/>
</dbReference>
<dbReference type="PANTHER" id="PTHR19376:SF54">
    <property type="entry name" value="DNA-DIRECTED RNA POLYMERASE SUBUNIT BETA"/>
    <property type="match status" value="1"/>
</dbReference>
<dbReference type="Pfam" id="PF04997">
    <property type="entry name" value="RNA_pol_Rpb1_1"/>
    <property type="match status" value="1"/>
</dbReference>
<dbReference type="Pfam" id="PF00623">
    <property type="entry name" value="RNA_pol_Rpb1_2"/>
    <property type="match status" value="2"/>
</dbReference>
<dbReference type="Pfam" id="PF04983">
    <property type="entry name" value="RNA_pol_Rpb1_3"/>
    <property type="match status" value="1"/>
</dbReference>
<dbReference type="Pfam" id="PF05000">
    <property type="entry name" value="RNA_pol_Rpb1_4"/>
    <property type="match status" value="1"/>
</dbReference>
<dbReference type="Pfam" id="PF04998">
    <property type="entry name" value="RNA_pol_Rpb1_5"/>
    <property type="match status" value="1"/>
</dbReference>
<dbReference type="SMART" id="SM00663">
    <property type="entry name" value="RPOLA_N"/>
    <property type="match status" value="1"/>
</dbReference>
<dbReference type="SUPFAM" id="SSF64484">
    <property type="entry name" value="beta and beta-prime subunits of DNA dependent RNA-polymerase"/>
    <property type="match status" value="1"/>
</dbReference>
<comment type="function">
    <text evidence="1">DNA-dependent RNA polymerase catalyzes the transcription of DNA into RNA using the four ribonucleoside triphosphates as substrates.</text>
</comment>
<comment type="catalytic activity">
    <reaction evidence="1">
        <text>RNA(n) + a ribonucleoside 5'-triphosphate = RNA(n+1) + diphosphate</text>
        <dbReference type="Rhea" id="RHEA:21248"/>
        <dbReference type="Rhea" id="RHEA-COMP:14527"/>
        <dbReference type="Rhea" id="RHEA-COMP:17342"/>
        <dbReference type="ChEBI" id="CHEBI:33019"/>
        <dbReference type="ChEBI" id="CHEBI:61557"/>
        <dbReference type="ChEBI" id="CHEBI:140395"/>
        <dbReference type="EC" id="2.7.7.6"/>
    </reaction>
</comment>
<comment type="cofactor">
    <cofactor evidence="1">
        <name>Mg(2+)</name>
        <dbReference type="ChEBI" id="CHEBI:18420"/>
    </cofactor>
    <text evidence="1">Binds 1 Mg(2+) ion per subunit.</text>
</comment>
<comment type="cofactor">
    <cofactor evidence="1">
        <name>Zn(2+)</name>
        <dbReference type="ChEBI" id="CHEBI:29105"/>
    </cofactor>
    <text evidence="1">Binds 2 Zn(2+) ions per subunit.</text>
</comment>
<comment type="subunit">
    <text evidence="1">The RNAP catalytic core consists of 2 alpha, 1 beta, 1 beta' and 1 omega subunit. When a sigma factor is associated with the core the holoenzyme is formed, which can initiate transcription.</text>
</comment>
<comment type="similarity">
    <text evidence="1">Belongs to the RNA polymerase beta' chain family.</text>
</comment>